<organism>
    <name type="scientific">Rattus norvegicus</name>
    <name type="common">Rat</name>
    <dbReference type="NCBI Taxonomy" id="10116"/>
    <lineage>
        <taxon>Eukaryota</taxon>
        <taxon>Metazoa</taxon>
        <taxon>Chordata</taxon>
        <taxon>Craniata</taxon>
        <taxon>Vertebrata</taxon>
        <taxon>Euteleostomi</taxon>
        <taxon>Mammalia</taxon>
        <taxon>Eutheria</taxon>
        <taxon>Euarchontoglires</taxon>
        <taxon>Glires</taxon>
        <taxon>Rodentia</taxon>
        <taxon>Myomorpha</taxon>
        <taxon>Muroidea</taxon>
        <taxon>Muridae</taxon>
        <taxon>Murinae</taxon>
        <taxon>Rattus</taxon>
    </lineage>
</organism>
<dbReference type="EC" id="1.14.13.225" evidence="2"/>
<dbReference type="EC" id="1.6.3.1" evidence="2"/>
<dbReference type="EMBL" id="CH474025">
    <property type="protein sequence ID" value="EDL99736.1"/>
    <property type="molecule type" value="Genomic_DNA"/>
</dbReference>
<dbReference type="RefSeq" id="NP_001099867.1">
    <molecule id="D3ZBP4-1"/>
    <property type="nucleotide sequence ID" value="NM_001106397.1"/>
</dbReference>
<dbReference type="SMR" id="D3ZBP4"/>
<dbReference type="FunCoup" id="D3ZBP4">
    <property type="interactions" value="517"/>
</dbReference>
<dbReference type="IntAct" id="D3ZBP4">
    <property type="interactions" value="1"/>
</dbReference>
<dbReference type="STRING" id="10116.ENSRNOP00000000337"/>
<dbReference type="GlyGen" id="D3ZBP4">
    <property type="glycosylation" value="1 site"/>
</dbReference>
<dbReference type="iPTMnet" id="D3ZBP4"/>
<dbReference type="PhosphoSitePlus" id="D3ZBP4"/>
<dbReference type="PaxDb" id="10116-ENSRNOP00000000337"/>
<dbReference type="Ensembl" id="ENSRNOT00000000337.5">
    <molecule id="D3ZBP4-1"/>
    <property type="protein sequence ID" value="ENSRNOP00000000337.4"/>
    <property type="gene ID" value="ENSRNOG00000000307.7"/>
</dbReference>
<dbReference type="GeneID" id="294520"/>
<dbReference type="KEGG" id="rno:294520"/>
<dbReference type="AGR" id="RGD:1309386"/>
<dbReference type="CTD" id="64780"/>
<dbReference type="RGD" id="1309386">
    <property type="gene designation" value="Mical1"/>
</dbReference>
<dbReference type="eggNOG" id="KOG1700">
    <property type="taxonomic scope" value="Eukaryota"/>
</dbReference>
<dbReference type="GeneTree" id="ENSGT00940000159117"/>
<dbReference type="HOGENOM" id="CLU_000329_0_0_1"/>
<dbReference type="InParanoid" id="D3ZBP4"/>
<dbReference type="OMA" id="APEWKEK"/>
<dbReference type="OrthoDB" id="20799at2759"/>
<dbReference type="TreeFam" id="TF324129"/>
<dbReference type="PRO" id="PR:D3ZBP4"/>
<dbReference type="Proteomes" id="UP000002494">
    <property type="component" value="Chromosome 20"/>
</dbReference>
<dbReference type="Proteomes" id="UP000234681">
    <property type="component" value="Chromosome 20"/>
</dbReference>
<dbReference type="Bgee" id="ENSRNOG00000000307">
    <property type="expression patterns" value="Expressed in thymus and 19 other cell types or tissues"/>
</dbReference>
<dbReference type="GO" id="GO:0005884">
    <property type="term" value="C:actin filament"/>
    <property type="evidence" value="ECO:0000266"/>
    <property type="project" value="RGD"/>
</dbReference>
<dbReference type="GO" id="GO:0036064">
    <property type="term" value="C:ciliary basal body"/>
    <property type="evidence" value="ECO:0007669"/>
    <property type="project" value="Ensembl"/>
</dbReference>
<dbReference type="GO" id="GO:0005737">
    <property type="term" value="C:cytoplasm"/>
    <property type="evidence" value="ECO:0000250"/>
    <property type="project" value="UniProtKB"/>
</dbReference>
<dbReference type="GO" id="GO:0005829">
    <property type="term" value="C:cytosol"/>
    <property type="evidence" value="ECO:0000250"/>
    <property type="project" value="UniProtKB"/>
</dbReference>
<dbReference type="GO" id="GO:0010008">
    <property type="term" value="C:endosome membrane"/>
    <property type="evidence" value="ECO:0000250"/>
    <property type="project" value="UniProtKB"/>
</dbReference>
<dbReference type="GO" id="GO:1990026">
    <property type="term" value="C:hippocampal mossy fiber expansion"/>
    <property type="evidence" value="ECO:0000266"/>
    <property type="project" value="RGD"/>
</dbReference>
<dbReference type="GO" id="GO:0045171">
    <property type="term" value="C:intercellular bridge"/>
    <property type="evidence" value="ECO:0000266"/>
    <property type="project" value="RGD"/>
</dbReference>
<dbReference type="GO" id="GO:0030496">
    <property type="term" value="C:midbody"/>
    <property type="evidence" value="ECO:0000266"/>
    <property type="project" value="RGD"/>
</dbReference>
<dbReference type="GO" id="GO:0005654">
    <property type="term" value="C:nucleoplasm"/>
    <property type="evidence" value="ECO:0007669"/>
    <property type="project" value="Ensembl"/>
</dbReference>
<dbReference type="GO" id="GO:0005886">
    <property type="term" value="C:plasma membrane"/>
    <property type="evidence" value="ECO:0007669"/>
    <property type="project" value="Ensembl"/>
</dbReference>
<dbReference type="GO" id="GO:0003779">
    <property type="term" value="F:actin binding"/>
    <property type="evidence" value="ECO:0000250"/>
    <property type="project" value="UniProtKB"/>
</dbReference>
<dbReference type="GO" id="GO:0120501">
    <property type="term" value="F:F-actin monooxygenase activity"/>
    <property type="evidence" value="ECO:0007669"/>
    <property type="project" value="UniProtKB-EC"/>
</dbReference>
<dbReference type="GO" id="GO:0071949">
    <property type="term" value="F:FAD binding"/>
    <property type="evidence" value="ECO:0000250"/>
    <property type="project" value="UniProtKB"/>
</dbReference>
<dbReference type="GO" id="GO:0046872">
    <property type="term" value="F:metal ion binding"/>
    <property type="evidence" value="ECO:0007669"/>
    <property type="project" value="UniProtKB-KW"/>
</dbReference>
<dbReference type="GO" id="GO:0004497">
    <property type="term" value="F:monooxygenase activity"/>
    <property type="evidence" value="ECO:0000266"/>
    <property type="project" value="RGD"/>
</dbReference>
<dbReference type="GO" id="GO:0016174">
    <property type="term" value="F:NAD(P)H oxidase H2O2-forming activity"/>
    <property type="evidence" value="ECO:0000266"/>
    <property type="project" value="RGD"/>
</dbReference>
<dbReference type="GO" id="GO:0106294">
    <property type="term" value="F:NADPH oxidase H202-forming activity"/>
    <property type="evidence" value="ECO:0007669"/>
    <property type="project" value="RHEA"/>
</dbReference>
<dbReference type="GO" id="GO:0016709">
    <property type="term" value="F:oxidoreductase activity, acting on paired donors, with incorporation or reduction of molecular oxygen, NAD(P)H as one donor, and incorporation of one atom of oxygen"/>
    <property type="evidence" value="ECO:0000250"/>
    <property type="project" value="UniProtKB"/>
</dbReference>
<dbReference type="GO" id="GO:0019901">
    <property type="term" value="F:protein kinase binding"/>
    <property type="evidence" value="ECO:0000266"/>
    <property type="project" value="RGD"/>
</dbReference>
<dbReference type="GO" id="GO:0017124">
    <property type="term" value="F:SH3 domain binding"/>
    <property type="evidence" value="ECO:0000266"/>
    <property type="project" value="RGD"/>
</dbReference>
<dbReference type="GO" id="GO:0031267">
    <property type="term" value="F:small GTPase binding"/>
    <property type="evidence" value="ECO:0000266"/>
    <property type="project" value="RGD"/>
</dbReference>
<dbReference type="GO" id="GO:0030042">
    <property type="term" value="P:actin filament depolymerization"/>
    <property type="evidence" value="ECO:0000250"/>
    <property type="project" value="UniProtKB"/>
</dbReference>
<dbReference type="GO" id="GO:0043066">
    <property type="term" value="P:negative regulation of apoptotic process"/>
    <property type="evidence" value="ECO:0000266"/>
    <property type="project" value="RGD"/>
</dbReference>
<dbReference type="GO" id="GO:1903305">
    <property type="term" value="P:regulation of regulated secretory pathway"/>
    <property type="evidence" value="ECO:0000266"/>
    <property type="project" value="RGD"/>
</dbReference>
<dbReference type="GO" id="GO:0019417">
    <property type="term" value="P:sulfur oxidation"/>
    <property type="evidence" value="ECO:0000250"/>
    <property type="project" value="UniProtKB"/>
</dbReference>
<dbReference type="CDD" id="cd21196">
    <property type="entry name" value="CH_MICAL1"/>
    <property type="match status" value="1"/>
</dbReference>
<dbReference type="CDD" id="cd09358">
    <property type="entry name" value="LIM_Mical_like"/>
    <property type="match status" value="1"/>
</dbReference>
<dbReference type="FunFam" id="1.10.418.10:FF:000058">
    <property type="entry name" value="F-actin-methionine sulfoxide oxidase MICAL1 isoform X1"/>
    <property type="match status" value="1"/>
</dbReference>
<dbReference type="FunFam" id="2.10.110.10:FF:000106">
    <property type="entry name" value="F-actin-monooxygenase MICAL1 isoform 1"/>
    <property type="match status" value="1"/>
</dbReference>
<dbReference type="FunFam" id="3.50.50.60:FF:000004">
    <property type="entry name" value="protein-methionine sulfoxide oxidase MICAL2 isoform X1"/>
    <property type="match status" value="1"/>
</dbReference>
<dbReference type="Gene3D" id="1.10.418.10">
    <property type="entry name" value="Calponin-like domain"/>
    <property type="match status" value="1"/>
</dbReference>
<dbReference type="Gene3D" id="2.10.110.10">
    <property type="entry name" value="Cysteine Rich Protein"/>
    <property type="match status" value="1"/>
</dbReference>
<dbReference type="Gene3D" id="3.50.50.60">
    <property type="entry name" value="FAD/NAD(P)-binding domain"/>
    <property type="match status" value="1"/>
</dbReference>
<dbReference type="InterPro" id="IPR022735">
    <property type="entry name" value="bMERB_dom"/>
</dbReference>
<dbReference type="InterPro" id="IPR001715">
    <property type="entry name" value="CH_dom"/>
</dbReference>
<dbReference type="InterPro" id="IPR036872">
    <property type="entry name" value="CH_dom_sf"/>
</dbReference>
<dbReference type="InterPro" id="IPR050540">
    <property type="entry name" value="F-actin_Monoox_Mical"/>
</dbReference>
<dbReference type="InterPro" id="IPR002938">
    <property type="entry name" value="FAD-bd"/>
</dbReference>
<dbReference type="InterPro" id="IPR036188">
    <property type="entry name" value="FAD/NAD-bd_sf"/>
</dbReference>
<dbReference type="InterPro" id="IPR001781">
    <property type="entry name" value="Znf_LIM"/>
</dbReference>
<dbReference type="PANTHER" id="PTHR23167:SF35">
    <property type="entry name" value="[F-ACTIN]-MONOOXYGENASE MICAL1"/>
    <property type="match status" value="1"/>
</dbReference>
<dbReference type="PANTHER" id="PTHR23167">
    <property type="entry name" value="CALPONIN HOMOLOGY DOMAIN-CONTAINING PROTEIN DDB_G0272472-RELATED"/>
    <property type="match status" value="1"/>
</dbReference>
<dbReference type="Pfam" id="PF12130">
    <property type="entry name" value="bMERB_dom"/>
    <property type="match status" value="1"/>
</dbReference>
<dbReference type="Pfam" id="PF00307">
    <property type="entry name" value="CH"/>
    <property type="match status" value="1"/>
</dbReference>
<dbReference type="Pfam" id="PF01494">
    <property type="entry name" value="FAD_binding_3"/>
    <property type="match status" value="1"/>
</dbReference>
<dbReference type="Pfam" id="PF00412">
    <property type="entry name" value="LIM"/>
    <property type="match status" value="1"/>
</dbReference>
<dbReference type="Pfam" id="PF25413">
    <property type="entry name" value="Rossman_Mical"/>
    <property type="match status" value="1"/>
</dbReference>
<dbReference type="SMART" id="SM00033">
    <property type="entry name" value="CH"/>
    <property type="match status" value="1"/>
</dbReference>
<dbReference type="SMART" id="SM01203">
    <property type="entry name" value="DUF3585"/>
    <property type="match status" value="1"/>
</dbReference>
<dbReference type="SMART" id="SM00132">
    <property type="entry name" value="LIM"/>
    <property type="match status" value="1"/>
</dbReference>
<dbReference type="SUPFAM" id="SSF47576">
    <property type="entry name" value="Calponin-homology domain, CH-domain"/>
    <property type="match status" value="1"/>
</dbReference>
<dbReference type="SUPFAM" id="SSF51905">
    <property type="entry name" value="FAD/NAD(P)-binding domain"/>
    <property type="match status" value="1"/>
</dbReference>
<dbReference type="SUPFAM" id="SSF57716">
    <property type="entry name" value="Glucocorticoid receptor-like (DNA-binding domain)"/>
    <property type="match status" value="2"/>
</dbReference>
<dbReference type="PROSITE" id="PS51848">
    <property type="entry name" value="BMERB"/>
    <property type="match status" value="1"/>
</dbReference>
<dbReference type="PROSITE" id="PS50021">
    <property type="entry name" value="CH"/>
    <property type="match status" value="1"/>
</dbReference>
<dbReference type="PROSITE" id="PS00478">
    <property type="entry name" value="LIM_DOMAIN_1"/>
    <property type="match status" value="1"/>
</dbReference>
<dbReference type="PROSITE" id="PS50023">
    <property type="entry name" value="LIM_DOMAIN_2"/>
    <property type="match status" value="1"/>
</dbReference>
<accession>D3ZBP4</accession>
<accession>D3ZJD1</accession>
<protein>
    <recommendedName>
        <fullName evidence="9">[F-actin]-monooxygenase MICAL1</fullName>
        <ecNumber evidence="2">1.14.13.225</ecNumber>
        <ecNumber evidence="2">1.6.3.1</ecNumber>
    </recommendedName>
    <alternativeName>
        <fullName>Molecule interacting with CasL protein 1</fullName>
        <shortName>MICAL-1</shortName>
    </alternativeName>
</protein>
<reference key="1">
    <citation type="journal article" date="2004" name="Nature">
        <title>Genome sequence of the Brown Norway rat yields insights into mammalian evolution.</title>
        <authorList>
            <person name="Gibbs R.A."/>
            <person name="Weinstock G.M."/>
            <person name="Metzker M.L."/>
            <person name="Muzny D.M."/>
            <person name="Sodergren E.J."/>
            <person name="Scherer S."/>
            <person name="Scott G."/>
            <person name="Steffen D."/>
            <person name="Worley K.C."/>
            <person name="Burch P.E."/>
            <person name="Okwuonu G."/>
            <person name="Hines S."/>
            <person name="Lewis L."/>
            <person name="Deramo C."/>
            <person name="Delgado O."/>
            <person name="Dugan-Rocha S."/>
            <person name="Miner G."/>
            <person name="Morgan M."/>
            <person name="Hawes A."/>
            <person name="Gill R."/>
            <person name="Holt R.A."/>
            <person name="Adams M.D."/>
            <person name="Amanatides P.G."/>
            <person name="Baden-Tillson H."/>
            <person name="Barnstead M."/>
            <person name="Chin S."/>
            <person name="Evans C.A."/>
            <person name="Ferriera S."/>
            <person name="Fosler C."/>
            <person name="Glodek A."/>
            <person name="Gu Z."/>
            <person name="Jennings D."/>
            <person name="Kraft C.L."/>
            <person name="Nguyen T."/>
            <person name="Pfannkoch C.M."/>
            <person name="Sitter C."/>
            <person name="Sutton G.G."/>
            <person name="Venter J.C."/>
            <person name="Woodage T."/>
            <person name="Smith D."/>
            <person name="Lee H.-M."/>
            <person name="Gustafson E."/>
            <person name="Cahill P."/>
            <person name="Kana A."/>
            <person name="Doucette-Stamm L."/>
            <person name="Weinstock K."/>
            <person name="Fechtel K."/>
            <person name="Weiss R.B."/>
            <person name="Dunn D.M."/>
            <person name="Green E.D."/>
            <person name="Blakesley R.W."/>
            <person name="Bouffard G.G."/>
            <person name="De Jong P.J."/>
            <person name="Osoegawa K."/>
            <person name="Zhu B."/>
            <person name="Marra M."/>
            <person name="Schein J."/>
            <person name="Bosdet I."/>
            <person name="Fjell C."/>
            <person name="Jones S."/>
            <person name="Krzywinski M."/>
            <person name="Mathewson C."/>
            <person name="Siddiqui A."/>
            <person name="Wye N."/>
            <person name="McPherson J."/>
            <person name="Zhao S."/>
            <person name="Fraser C.M."/>
            <person name="Shetty J."/>
            <person name="Shatsman S."/>
            <person name="Geer K."/>
            <person name="Chen Y."/>
            <person name="Abramzon S."/>
            <person name="Nierman W.C."/>
            <person name="Havlak P.H."/>
            <person name="Chen R."/>
            <person name="Durbin K.J."/>
            <person name="Egan A."/>
            <person name="Ren Y."/>
            <person name="Song X.-Z."/>
            <person name="Li B."/>
            <person name="Liu Y."/>
            <person name="Qin X."/>
            <person name="Cawley S."/>
            <person name="Cooney A.J."/>
            <person name="D'Souza L.M."/>
            <person name="Martin K."/>
            <person name="Wu J.Q."/>
            <person name="Gonzalez-Garay M.L."/>
            <person name="Jackson A.R."/>
            <person name="Kalafus K.J."/>
            <person name="McLeod M.P."/>
            <person name="Milosavljevic A."/>
            <person name="Virk D."/>
            <person name="Volkov A."/>
            <person name="Wheeler D.A."/>
            <person name="Zhang Z."/>
            <person name="Bailey J.A."/>
            <person name="Eichler E.E."/>
            <person name="Tuzun E."/>
            <person name="Birney E."/>
            <person name="Mongin E."/>
            <person name="Ureta-Vidal A."/>
            <person name="Woodwark C."/>
            <person name="Zdobnov E."/>
            <person name="Bork P."/>
            <person name="Suyama M."/>
            <person name="Torrents D."/>
            <person name="Alexandersson M."/>
            <person name="Trask B.J."/>
            <person name="Young J.M."/>
            <person name="Huang H."/>
            <person name="Wang H."/>
            <person name="Xing H."/>
            <person name="Daniels S."/>
            <person name="Gietzen D."/>
            <person name="Schmidt J."/>
            <person name="Stevens K."/>
            <person name="Vitt U."/>
            <person name="Wingrove J."/>
            <person name="Camara F."/>
            <person name="Mar Alba M."/>
            <person name="Abril J.F."/>
            <person name="Guigo R."/>
            <person name="Smit A."/>
            <person name="Dubchak I."/>
            <person name="Rubin E.M."/>
            <person name="Couronne O."/>
            <person name="Poliakov A."/>
            <person name="Huebner N."/>
            <person name="Ganten D."/>
            <person name="Goesele C."/>
            <person name="Hummel O."/>
            <person name="Kreitler T."/>
            <person name="Lee Y.-A."/>
            <person name="Monti J."/>
            <person name="Schulz H."/>
            <person name="Zimdahl H."/>
            <person name="Himmelbauer H."/>
            <person name="Lehrach H."/>
            <person name="Jacob H.J."/>
            <person name="Bromberg S."/>
            <person name="Gullings-Handley J."/>
            <person name="Jensen-Seaman M.I."/>
            <person name="Kwitek A.E."/>
            <person name="Lazar J."/>
            <person name="Pasko D."/>
            <person name="Tonellato P.J."/>
            <person name="Twigger S."/>
            <person name="Ponting C.P."/>
            <person name="Duarte J.M."/>
            <person name="Rice S."/>
            <person name="Goodstadt L."/>
            <person name="Beatson S.A."/>
            <person name="Emes R.D."/>
            <person name="Winter E.E."/>
            <person name="Webber C."/>
            <person name="Brandt P."/>
            <person name="Nyakatura G."/>
            <person name="Adetobi M."/>
            <person name="Chiaromonte F."/>
            <person name="Elnitski L."/>
            <person name="Eswara P."/>
            <person name="Hardison R.C."/>
            <person name="Hou M."/>
            <person name="Kolbe D."/>
            <person name="Makova K."/>
            <person name="Miller W."/>
            <person name="Nekrutenko A."/>
            <person name="Riemer C."/>
            <person name="Schwartz S."/>
            <person name="Taylor J."/>
            <person name="Yang S."/>
            <person name="Zhang Y."/>
            <person name="Lindpaintner K."/>
            <person name="Andrews T.D."/>
            <person name="Caccamo M."/>
            <person name="Clamp M."/>
            <person name="Clarke L."/>
            <person name="Curwen V."/>
            <person name="Durbin R.M."/>
            <person name="Eyras E."/>
            <person name="Searle S.M."/>
            <person name="Cooper G.M."/>
            <person name="Batzoglou S."/>
            <person name="Brudno M."/>
            <person name="Sidow A."/>
            <person name="Stone E.A."/>
            <person name="Payseur B.A."/>
            <person name="Bourque G."/>
            <person name="Lopez-Otin C."/>
            <person name="Puente X.S."/>
            <person name="Chakrabarti K."/>
            <person name="Chatterji S."/>
            <person name="Dewey C."/>
            <person name="Pachter L."/>
            <person name="Bray N."/>
            <person name="Yap V.B."/>
            <person name="Caspi A."/>
            <person name="Tesler G."/>
            <person name="Pevzner P.A."/>
            <person name="Haussler D."/>
            <person name="Roskin K.M."/>
            <person name="Baertsch R."/>
            <person name="Clawson H."/>
            <person name="Furey T.S."/>
            <person name="Hinrichs A.S."/>
            <person name="Karolchik D."/>
            <person name="Kent W.J."/>
            <person name="Rosenbloom K.R."/>
            <person name="Trumbower H."/>
            <person name="Weirauch M."/>
            <person name="Cooper D.N."/>
            <person name="Stenson P.D."/>
            <person name="Ma B."/>
            <person name="Brent M."/>
            <person name="Arumugam M."/>
            <person name="Shteynberg D."/>
            <person name="Copley R.R."/>
            <person name="Taylor M.S."/>
            <person name="Riethman H."/>
            <person name="Mudunuri U."/>
            <person name="Peterson J."/>
            <person name="Guyer M."/>
            <person name="Felsenfeld A."/>
            <person name="Old S."/>
            <person name="Mockrin S."/>
            <person name="Collins F.S."/>
        </authorList>
    </citation>
    <scope>NUCLEOTIDE SEQUENCE [LARGE SCALE GENOMIC DNA]</scope>
    <source>
        <strain>Brown Norway</strain>
    </source>
</reference>
<reference key="2">
    <citation type="submission" date="2005-07" db="EMBL/GenBank/DDBJ databases">
        <authorList>
            <person name="Mural R.J."/>
            <person name="Adams M.D."/>
            <person name="Myers E.W."/>
            <person name="Smith H.O."/>
            <person name="Venter J.C."/>
        </authorList>
    </citation>
    <scope>NUCLEOTIDE SEQUENCE [LARGE SCALE GENOMIC DNA]</scope>
    <source>
        <strain>Brown Norway</strain>
    </source>
</reference>
<reference key="3">
    <citation type="journal article" date="2012" name="Nat. Commun.">
        <title>Quantitative maps of protein phosphorylation sites across 14 different rat organs and tissues.</title>
        <authorList>
            <person name="Lundby A."/>
            <person name="Secher A."/>
            <person name="Lage K."/>
            <person name="Nordsborg N.B."/>
            <person name="Dmytriyev A."/>
            <person name="Lundby C."/>
            <person name="Olsen J.V."/>
        </authorList>
    </citation>
    <scope>PHOSPHORYLATION [LARGE SCALE ANALYSIS] AT THR-475</scope>
    <scope>IDENTIFICATION BY MASS SPECTROMETRY [LARGE SCALE ANALYSIS]</scope>
</reference>
<proteinExistence type="evidence at protein level"/>
<sequence length="1047" mass="116672">MASPTSTNPAHDHFETFVQAQLCQDVLSSFQGLCRALGVESGGGLPQYHKIKAQLNYWSAKSLWAKLDKRASQPAYQQGQACTNTKCLVVGAGPCGLRAAVELALLGARVVLVEKRTKFSRHNVLHLWPFTIHDLRALGAKKFYGRFCTGTLDHISIRQLQLLLLKVALLLGVEIHWGFTFTGLQPPPKKGSGWRARIQPSPPAQLASYEFDVLISAGGGKFVPEGFTIREMRGKLAIGITANFVNGRTVEETQVPEISGVARIYNQKFFQSLLKATGIDLENIVYYKDDTHYFVMTAKKQCLLRLGVLRQDLPETDQLLGKANVVPEALQQFARAAADFATQGKLGKLEFAQDARGRPDVAAFDFTSMMRSESSARIQEKHGARLLLGLVGDCLVEPFWPLGTGVARGFLAAFDAAWMVKRWAEGTGPLELLAERESLYQLLSQTSPENMHRNVAQYGLDPATRYPNLNLRAVTPNQVQDLYDIMDKEHARKKSDETDARKTTTGSAGTEELLHWCQEQTAGFPGVSVTDFSSSWADGRALCALVHRLQPGLLEPSELQGMSALEATAWALRVAEYELGIIPVLSAQAVVAGSDPLGLIAYLSHFHSAFKNTPHSSGLVSQPHGTPSAILFLGKLQRSLQRTRTKVEEETPCTEEPPVSEPSVPPALPSEHEEAGAEDVCELCGKRLYILERFCVDGHFFHRGCFCCRTCEATLRPGGYGQYPGDGYFYCLQHLPQEDQKEADNNGSPENQELPTPGDSTTQSGPSSPVPPVTEASPVPSPSQPARRLIRLSSVERLRLSSLNIIPDSGVEPPPKPPRSCLDLAQESLKSSFMGWGVLRAPQVPEAIEKGEEEEEEEEEEEEEEEELPPPLALEVEQSLLTLAKNSGDMTKYPTWRRTLMRRAKEEEMKRFCKAQAIQRRLNEIEAAMRELETEGMKLEVALRKESSSPEKQKKLWLEQLLQLIQKKNSLVTEEAELMITVQELDLEEKQRQLDHEFRGINREETLKTQADRLSEDRVLRKLLDVVNQRDALIQFQEERRLREMPV</sequence>
<gene>
    <name type="primary">Mical1</name>
</gene>
<feature type="chain" id="PRO_0000416299" description="[F-actin]-monooxygenase MICAL1">
    <location>
        <begin position="1"/>
        <end position="1047"/>
    </location>
</feature>
<feature type="domain" description="Calponin-homology (CH)" evidence="5">
    <location>
        <begin position="507"/>
        <end position="611"/>
    </location>
</feature>
<feature type="domain" description="LIM zinc-binding" evidence="6">
    <location>
        <begin position="679"/>
        <end position="741"/>
    </location>
</feature>
<feature type="domain" description="bMERB" evidence="7">
    <location>
        <begin position="905"/>
        <end position="1047"/>
    </location>
</feature>
<feature type="region of interest" description="Monooxygenase domain" evidence="3">
    <location>
        <begin position="1"/>
        <end position="489"/>
    </location>
</feature>
<feature type="region of interest" description="Disordered" evidence="8">
    <location>
        <begin position="644"/>
        <end position="672"/>
    </location>
</feature>
<feature type="region of interest" description="Disordered" evidence="8">
    <location>
        <begin position="739"/>
        <end position="787"/>
    </location>
</feature>
<feature type="region of interest" description="Disordered" evidence="8">
    <location>
        <begin position="849"/>
        <end position="872"/>
    </location>
</feature>
<feature type="coiled-coil region" evidence="4">
    <location>
        <begin position="912"/>
        <end position="996"/>
    </location>
</feature>
<feature type="compositionally biased region" description="Pro residues" evidence="8">
    <location>
        <begin position="659"/>
        <end position="668"/>
    </location>
</feature>
<feature type="compositionally biased region" description="Polar residues" evidence="8">
    <location>
        <begin position="745"/>
        <end position="767"/>
    </location>
</feature>
<feature type="compositionally biased region" description="Acidic residues" evidence="8">
    <location>
        <begin position="851"/>
        <end position="868"/>
    </location>
</feature>
<feature type="binding site" evidence="3">
    <location>
        <position position="95"/>
    </location>
    <ligand>
        <name>FAD</name>
        <dbReference type="ChEBI" id="CHEBI:57692"/>
    </ligand>
</feature>
<feature type="binding site" evidence="3">
    <location>
        <begin position="114"/>
        <end position="116"/>
    </location>
    <ligand>
        <name>FAD</name>
        <dbReference type="ChEBI" id="CHEBI:57692"/>
    </ligand>
</feature>
<feature type="binding site" evidence="3">
    <location>
        <begin position="121"/>
        <end position="123"/>
    </location>
    <ligand>
        <name>FAD</name>
        <dbReference type="ChEBI" id="CHEBI:57692"/>
    </ligand>
</feature>
<feature type="binding site" evidence="3">
    <location>
        <position position="181"/>
    </location>
    <ligand>
        <name>FAD</name>
        <dbReference type="ChEBI" id="CHEBI:57692"/>
    </ligand>
</feature>
<feature type="binding site" evidence="3">
    <location>
        <position position="293"/>
    </location>
    <ligand>
        <name>FAD</name>
        <dbReference type="ChEBI" id="CHEBI:57692"/>
    </ligand>
</feature>
<feature type="binding site" evidence="3">
    <location>
        <position position="393"/>
    </location>
    <ligand>
        <name>FAD</name>
        <dbReference type="ChEBI" id="CHEBI:57692"/>
    </ligand>
</feature>
<feature type="binding site" evidence="2">
    <location>
        <position position="681"/>
    </location>
    <ligand>
        <name>Zn(2+)</name>
        <dbReference type="ChEBI" id="CHEBI:29105"/>
        <label>1</label>
    </ligand>
</feature>
<feature type="binding site" evidence="2">
    <location>
        <position position="684"/>
    </location>
    <ligand>
        <name>Zn(2+)</name>
        <dbReference type="ChEBI" id="CHEBI:29105"/>
        <label>1</label>
    </ligand>
</feature>
<feature type="binding site" evidence="2">
    <location>
        <position position="702"/>
    </location>
    <ligand>
        <name>Zn(2+)</name>
        <dbReference type="ChEBI" id="CHEBI:29105"/>
        <label>1</label>
    </ligand>
</feature>
<feature type="binding site" evidence="2">
    <location>
        <position position="705"/>
    </location>
    <ligand>
        <name>Zn(2+)</name>
        <dbReference type="ChEBI" id="CHEBI:29105"/>
        <label>1</label>
    </ligand>
</feature>
<feature type="binding site" evidence="2">
    <location>
        <position position="708"/>
    </location>
    <ligand>
        <name>Zn(2+)</name>
        <dbReference type="ChEBI" id="CHEBI:29105"/>
        <label>2</label>
    </ligand>
</feature>
<feature type="binding site" evidence="2">
    <location>
        <position position="711"/>
    </location>
    <ligand>
        <name>Zn(2+)</name>
        <dbReference type="ChEBI" id="CHEBI:29105"/>
        <label>2</label>
    </ligand>
</feature>
<feature type="binding site" evidence="2">
    <location>
        <position position="731"/>
    </location>
    <ligand>
        <name>Zn(2+)</name>
        <dbReference type="ChEBI" id="CHEBI:29105"/>
        <label>2</label>
    </ligand>
</feature>
<feature type="binding site" evidence="2">
    <location>
        <position position="734"/>
    </location>
    <ligand>
        <name>Zn(2+)</name>
        <dbReference type="ChEBI" id="CHEBI:29105"/>
        <label>2</label>
    </ligand>
</feature>
<feature type="site" description="Important for interaction with ARHGAP26 AND ARHGAP10" evidence="2">
    <location>
        <position position="816"/>
    </location>
</feature>
<feature type="modified residue" description="Phosphothreonine" evidence="10">
    <location>
        <position position="475"/>
    </location>
</feature>
<feature type="modified residue" description="Phosphoserine" evidence="2">
    <location>
        <position position="616"/>
    </location>
</feature>
<feature type="modified residue" description="Phosphoserine" evidence="3">
    <location>
        <position position="777"/>
    </location>
</feature>
<feature type="modified residue" description="Phosphoserine" evidence="3">
    <location>
        <position position="781"/>
    </location>
</feature>
<feature type="splice variant" id="VSP_042607" description="In isoform 2." evidence="9">
    <location>
        <begin position="87"/>
        <end position="159"/>
    </location>
</feature>
<feature type="splice variant" id="VSP_042608" description="In isoform 2." evidence="9">
    <original>S</original>
    <variation>N</variation>
    <location>
        <position position="192"/>
    </location>
</feature>
<keyword id="KW-0009">Actin-binding</keyword>
<keyword id="KW-0025">Alternative splicing</keyword>
<keyword id="KW-0175">Coiled coil</keyword>
<keyword id="KW-0963">Cytoplasm</keyword>
<keyword id="KW-0206">Cytoskeleton</keyword>
<keyword id="KW-0967">Endosome</keyword>
<keyword id="KW-0274">FAD</keyword>
<keyword id="KW-0285">Flavoprotein</keyword>
<keyword id="KW-0440">LIM domain</keyword>
<keyword id="KW-0472">Membrane</keyword>
<keyword id="KW-0479">Metal-binding</keyword>
<keyword id="KW-0503">Monooxygenase</keyword>
<keyword id="KW-0521">NADP</keyword>
<keyword id="KW-0560">Oxidoreductase</keyword>
<keyword id="KW-0597">Phosphoprotein</keyword>
<keyword id="KW-1185">Reference proteome</keyword>
<keyword id="KW-0862">Zinc</keyword>
<evidence type="ECO:0000250" key="1">
    <source>
        <dbReference type="UniProtKB" id="Q86BA1"/>
    </source>
</evidence>
<evidence type="ECO:0000250" key="2">
    <source>
        <dbReference type="UniProtKB" id="Q8TDZ2"/>
    </source>
</evidence>
<evidence type="ECO:0000250" key="3">
    <source>
        <dbReference type="UniProtKB" id="Q8VDP3"/>
    </source>
</evidence>
<evidence type="ECO:0000255" key="4"/>
<evidence type="ECO:0000255" key="5">
    <source>
        <dbReference type="PROSITE-ProRule" id="PRU00044"/>
    </source>
</evidence>
<evidence type="ECO:0000255" key="6">
    <source>
        <dbReference type="PROSITE-ProRule" id="PRU00125"/>
    </source>
</evidence>
<evidence type="ECO:0000255" key="7">
    <source>
        <dbReference type="PROSITE-ProRule" id="PRU01195"/>
    </source>
</evidence>
<evidence type="ECO:0000256" key="8">
    <source>
        <dbReference type="SAM" id="MobiDB-lite"/>
    </source>
</evidence>
<evidence type="ECO:0000305" key="9"/>
<evidence type="ECO:0007744" key="10">
    <source>
    </source>
</evidence>
<comment type="function">
    <text evidence="2">Monooxygenase that promotes depolymerization of F-actin by mediating oxidation of specific methionine residues on actin to form methionine-sulfoxide, resulting in actin filament disassembly and preventing repolymerization. In the absence of actin, it also functions as a NADPH oxidase producing H(2)O(2). Acts as a cytoskeletal regulator that connects NEDD9 to intermediate filaments. Also acts as a negative regulator of apoptosis via its interaction with STK38 and STK38L; acts by antagonizing STK38 and STK38L activation by MST1/STK4. Involved in regulation of lamina-specific connectivity in the nervous system such as the development of lamina-restricted hippocampal connections. Through redox regulation of the actin cytoskeleton controls the intracellular distribution of secretory vesicles containing L1/neurofascin/NgCAM family proteins in neurons, thereby regulating their cell surface levels. May act as Rab effector protein and play a role in vesicle trafficking. Promotes endosomal tubule extension by associating with RAB8 (RAB8A or RAB8B), RAB10 and GRAF (GRAF1/ARHGAP26 or GRAF2/ARHGAP10) on the endosomal membrane which may connect GRAFs to Rabs, thereby participating in neosynthesized Rab8-Rab10-Rab11-dependent protein export (By similarity).</text>
</comment>
<comment type="catalytic activity">
    <reaction evidence="2">
        <text>L-methionyl-[F-actin] + NADPH + O2 + H(+) = L-methionyl-(R)-S-oxide-[F-actin] + NADP(+) + H2O</text>
        <dbReference type="Rhea" id="RHEA:51308"/>
        <dbReference type="Rhea" id="RHEA-COMP:12953"/>
        <dbReference type="Rhea" id="RHEA-COMP:12956"/>
        <dbReference type="ChEBI" id="CHEBI:15377"/>
        <dbReference type="ChEBI" id="CHEBI:15378"/>
        <dbReference type="ChEBI" id="CHEBI:15379"/>
        <dbReference type="ChEBI" id="CHEBI:16044"/>
        <dbReference type="ChEBI" id="CHEBI:45764"/>
        <dbReference type="ChEBI" id="CHEBI:57783"/>
        <dbReference type="ChEBI" id="CHEBI:58349"/>
        <dbReference type="EC" id="1.14.13.225"/>
    </reaction>
</comment>
<comment type="catalytic activity">
    <reaction evidence="2">
        <text>NADPH + O2 + H(+) = H2O2 + NADP(+)</text>
        <dbReference type="Rhea" id="RHEA:11260"/>
        <dbReference type="ChEBI" id="CHEBI:15378"/>
        <dbReference type="ChEBI" id="CHEBI:15379"/>
        <dbReference type="ChEBI" id="CHEBI:16240"/>
        <dbReference type="ChEBI" id="CHEBI:57783"/>
        <dbReference type="ChEBI" id="CHEBI:58349"/>
        <dbReference type="EC" id="1.6.3.1"/>
    </reaction>
</comment>
<comment type="cofactor">
    <cofactor evidence="2">
        <name>FAD</name>
        <dbReference type="ChEBI" id="CHEBI:57692"/>
    </cofactor>
</comment>
<comment type="subunit">
    <text evidence="2">Interacts with STK38 and STK38L. Associates with the SH3 domain of NEDD9. Interacts with VIM and PLXNA3. Interacts with RAB1B, RAB8A, RAB10, RAB13 and RAB15 (in their GTP-bound forms); binding to RAB1B is of low affinity compared to other Rab proteins; at least in case of RAB8A and RAB10 can bind 2 molecules of the Rab proteins simultaneously. Interacts with GRAF1/ARHGAP26, GRAF2/ARHGAP10, RAB8A, RAB8B and RAB10; may bind simultaneously to GRAFs and Rabs and connects GRAFs to Rabs (By similarity). Does not interact with RAB1 and RAB11A (By similarity).</text>
</comment>
<comment type="subcellular location">
    <subcellularLocation>
        <location evidence="2">Cytoplasm</location>
    </subcellularLocation>
    <subcellularLocation>
        <location evidence="2">Cytoplasm</location>
        <location evidence="2">Cytoskeleton</location>
    </subcellularLocation>
    <subcellularLocation>
        <location evidence="2">Endosome membrane</location>
    </subcellularLocation>
    <subcellularLocation>
        <location evidence="2">Midbody</location>
    </subcellularLocation>
</comment>
<comment type="alternative products">
    <event type="alternative splicing"/>
    <isoform>
        <id>D3ZBP4-1</id>
        <name>1</name>
        <sequence type="displayed"/>
    </isoform>
    <isoform>
        <id>D3ZBP4-2</id>
        <name>2</name>
        <sequence type="described" ref="VSP_042607 VSP_042608"/>
    </isoform>
</comment>
<comment type="domain">
    <text evidence="2">The C-terminal coiled coil part contains the plexin-interacting region.</text>
</comment>
<comment type="domain">
    <text evidence="2">The bivalent Mical/EHBP Rab binding (bMERB) domain, mediates binding to predominantly Rab8, Rab10, Rab13 and Rab15 (in their GTP-bound forms).</text>
</comment>
<comment type="similarity">
    <text evidence="9">Belongs to the Mical family.</text>
</comment>
<comment type="caution">
    <text evidence="1 2 3">The reaction mechanism is subject to discussion. Some work suggest MICAL enzymes directly oxidize actin methionine residues to produce methionine-(R)-S-oxide. Other publications suggest that the enzyme functions as a NADPH oxidase producing H(2)O(2) (EC 1.6.3.1) and that it is the produced H(2)O(2) that is responsible for the methionine-(R)-S-oxide production.</text>
</comment>
<name>MICA1_RAT</name>